<protein>
    <recommendedName>
        <fullName>PH and SEC7 domain-containing protein 1</fullName>
    </recommendedName>
    <alternativeName>
        <fullName>Exchange factor for ADP-ribosylation factor guanine nucleotide factor 6</fullName>
        <shortName>Exchange factor for ARF6</shortName>
    </alternativeName>
    <alternativeName>
        <fullName>Exchange factor for ARF6 A</fullName>
    </alternativeName>
    <alternativeName>
        <fullName>Pleckstrin homology and SEC7 domain-containing protein 1</fullName>
    </alternativeName>
</protein>
<evidence type="ECO:0000250" key="1">
    <source>
        <dbReference type="UniProtKB" id="A5PKW4"/>
    </source>
</evidence>
<evidence type="ECO:0000255" key="2"/>
<evidence type="ECO:0000255" key="3">
    <source>
        <dbReference type="PROSITE-ProRule" id="PRU00145"/>
    </source>
</evidence>
<evidence type="ECO:0000255" key="4">
    <source>
        <dbReference type="PROSITE-ProRule" id="PRU00189"/>
    </source>
</evidence>
<evidence type="ECO:0000256" key="5">
    <source>
        <dbReference type="SAM" id="MobiDB-lite"/>
    </source>
</evidence>
<evidence type="ECO:0000269" key="6">
    <source>
    </source>
</evidence>
<evidence type="ECO:0000269" key="7">
    <source>
    </source>
</evidence>
<evidence type="ECO:0000269" key="8">
    <source>
    </source>
</evidence>
<evidence type="ECO:0000303" key="9">
    <source>
    </source>
</evidence>
<evidence type="ECO:0000303" key="10">
    <source>
    </source>
</evidence>
<evidence type="ECO:0000303" key="11">
    <source>
    </source>
</evidence>
<evidence type="ECO:0000305" key="12"/>
<evidence type="ECO:0007744" key="13">
    <source>
    </source>
</evidence>
<dbReference type="EMBL" id="AC114539">
    <property type="status" value="NOT_ANNOTATED_CDS"/>
    <property type="molecule type" value="Genomic_DNA"/>
</dbReference>
<dbReference type="EMBL" id="AK158851">
    <property type="protein sequence ID" value="BAE34694.1"/>
    <property type="molecule type" value="mRNA"/>
</dbReference>
<dbReference type="EMBL" id="BC058352">
    <property type="protein sequence ID" value="AAH58352.1"/>
    <property type="molecule type" value="mRNA"/>
</dbReference>
<dbReference type="EMBL" id="BC138652">
    <property type="protein sequence ID" value="AAI38653.1"/>
    <property type="molecule type" value="mRNA"/>
</dbReference>
<dbReference type="EMBL" id="BC145352">
    <property type="protein sequence ID" value="AAI45353.1"/>
    <property type="molecule type" value="mRNA"/>
</dbReference>
<dbReference type="EMBL" id="AK220438">
    <property type="protein sequence ID" value="BAD90268.1"/>
    <property type="molecule type" value="Transcribed_RNA"/>
</dbReference>
<dbReference type="CCDS" id="CCDS29875.1">
    <molecule id="Q5DTT2-1"/>
</dbReference>
<dbReference type="CCDS" id="CCDS84449.1">
    <molecule id="Q5DTT2-3"/>
</dbReference>
<dbReference type="RefSeq" id="NP_001334383.1">
    <molecule id="Q5DTT2-3"/>
    <property type="nucleotide sequence ID" value="NM_001347454.1"/>
</dbReference>
<dbReference type="RefSeq" id="NP_082903.2">
    <molecule id="Q5DTT2-1"/>
    <property type="nucleotide sequence ID" value="NM_028627.2"/>
</dbReference>
<dbReference type="RefSeq" id="XP_006527449.1">
    <molecule id="Q5DTT2-3"/>
    <property type="nucleotide sequence ID" value="XM_006527386.5"/>
</dbReference>
<dbReference type="RefSeq" id="XP_006527451.1">
    <molecule id="Q5DTT2-3"/>
    <property type="nucleotide sequence ID" value="XM_006527388.5"/>
</dbReference>
<dbReference type="RefSeq" id="XP_006527452.1">
    <molecule id="Q5DTT2-3"/>
    <property type="nucleotide sequence ID" value="XM_006527389.4"/>
</dbReference>
<dbReference type="RefSeq" id="XP_006527454.1">
    <molecule id="Q5DTT2-3"/>
    <property type="nucleotide sequence ID" value="XM_006527391.4"/>
</dbReference>
<dbReference type="RefSeq" id="XP_006527456.1">
    <molecule id="Q5DTT2-2"/>
    <property type="nucleotide sequence ID" value="XM_006527393.3"/>
</dbReference>
<dbReference type="RefSeq" id="XP_011245678.1">
    <molecule id="Q5DTT2-3"/>
    <property type="nucleotide sequence ID" value="XM_011247376.4"/>
</dbReference>
<dbReference type="RefSeq" id="XP_011245679.1">
    <molecule id="Q5DTT2-1"/>
    <property type="nucleotide sequence ID" value="XM_011247377.4"/>
</dbReference>
<dbReference type="RefSeq" id="XP_030106964.1">
    <molecule id="Q5DTT2-3"/>
    <property type="nucleotide sequence ID" value="XM_030251104.2"/>
</dbReference>
<dbReference type="RefSeq" id="XP_030106965.1">
    <molecule id="Q5DTT2-3"/>
    <property type="nucleotide sequence ID" value="XM_030251105.2"/>
</dbReference>
<dbReference type="RefSeq" id="XP_030106966.1">
    <molecule id="Q5DTT2-3"/>
    <property type="nucleotide sequence ID" value="XM_030251106.1"/>
</dbReference>
<dbReference type="RefSeq" id="XP_030106967.1">
    <molecule id="Q5DTT2-1"/>
    <property type="nucleotide sequence ID" value="XM_030251107.2"/>
</dbReference>
<dbReference type="RefSeq" id="XP_030106968.1">
    <molecule id="Q5DTT2-1"/>
    <property type="nucleotide sequence ID" value="XM_030251108.2"/>
</dbReference>
<dbReference type="RefSeq" id="XP_030106969.1">
    <molecule id="Q5DTT2-1"/>
    <property type="nucleotide sequence ID" value="XM_030251109.1"/>
</dbReference>
<dbReference type="RefSeq" id="XP_030106970.1">
    <molecule id="Q5DTT2-1"/>
    <property type="nucleotide sequence ID" value="XM_030251110.1"/>
</dbReference>
<dbReference type="RefSeq" id="XP_030106971.1">
    <molecule id="Q5DTT2-1"/>
    <property type="nucleotide sequence ID" value="XM_030251111.2"/>
</dbReference>
<dbReference type="RefSeq" id="XP_036017601.1">
    <molecule id="Q5DTT2-1"/>
    <property type="nucleotide sequence ID" value="XM_036161708.1"/>
</dbReference>
<dbReference type="SMR" id="Q5DTT2"/>
<dbReference type="BioGRID" id="216216">
    <property type="interactions" value="3"/>
</dbReference>
<dbReference type="CORUM" id="Q5DTT2"/>
<dbReference type="FunCoup" id="Q5DTT2">
    <property type="interactions" value="585"/>
</dbReference>
<dbReference type="IntAct" id="Q5DTT2">
    <property type="interactions" value="1"/>
</dbReference>
<dbReference type="STRING" id="10090.ENSMUSP00000093729"/>
<dbReference type="ChEMBL" id="CHEMBL4523322"/>
<dbReference type="GlyGen" id="Q5DTT2">
    <property type="glycosylation" value="2 sites"/>
</dbReference>
<dbReference type="iPTMnet" id="Q5DTT2"/>
<dbReference type="PhosphoSitePlus" id="Q5DTT2"/>
<dbReference type="SwissPalm" id="Q5DTT2"/>
<dbReference type="PaxDb" id="10090-ENSMUSP00000093729"/>
<dbReference type="PeptideAtlas" id="Q5DTT2"/>
<dbReference type="ProteomicsDB" id="301857">
    <molecule id="Q5DTT2-1"/>
</dbReference>
<dbReference type="ProteomicsDB" id="301858">
    <molecule id="Q5DTT2-2"/>
</dbReference>
<dbReference type="ProteomicsDB" id="301859">
    <molecule id="Q5DTT2-3"/>
</dbReference>
<dbReference type="Antibodypedia" id="31428">
    <property type="antibodies" value="50 antibodies from 16 providers"/>
</dbReference>
<dbReference type="DNASU" id="73728"/>
<dbReference type="Ensembl" id="ENSMUST00000041391.5">
    <molecule id="Q5DTT2-1"/>
    <property type="protein sequence ID" value="ENSMUSP00000039728.5"/>
    <property type="gene ID" value="ENSMUSG00000037126.17"/>
</dbReference>
<dbReference type="Ensembl" id="ENSMUST00000096029.12">
    <molecule id="Q5DTT2-3"/>
    <property type="protein sequence ID" value="ENSMUSP00000093729.6"/>
    <property type="gene ID" value="ENSMUSG00000037126.17"/>
</dbReference>
<dbReference type="Ensembl" id="ENSMUST00000224556.2">
    <molecule id="Q5DTT2-2"/>
    <property type="protein sequence ID" value="ENSMUSP00000153381.2"/>
    <property type="gene ID" value="ENSMUSG00000037126.17"/>
</dbReference>
<dbReference type="Ensembl" id="ENSMUST00000225323.2">
    <molecule id="Q5DTT2-3"/>
    <property type="protein sequence ID" value="ENSMUSP00000152942.2"/>
    <property type="gene ID" value="ENSMUSG00000037126.17"/>
</dbReference>
<dbReference type="GeneID" id="73728"/>
<dbReference type="KEGG" id="mmu:73728"/>
<dbReference type="UCSC" id="uc008htb.1">
    <molecule id="Q5DTT2-2"/>
    <property type="organism name" value="mouse"/>
</dbReference>
<dbReference type="UCSC" id="uc008htd.1">
    <molecule id="Q5DTT2-1"/>
    <property type="organism name" value="mouse"/>
</dbReference>
<dbReference type="UCSC" id="uc012bmt.1">
    <molecule id="Q5DTT2-3"/>
    <property type="organism name" value="mouse"/>
</dbReference>
<dbReference type="AGR" id="MGI:1920978"/>
<dbReference type="CTD" id="5662"/>
<dbReference type="MGI" id="MGI:1920978">
    <property type="gene designation" value="Psd"/>
</dbReference>
<dbReference type="VEuPathDB" id="HostDB:ENSMUSG00000037126"/>
<dbReference type="eggNOG" id="KOG0932">
    <property type="taxonomic scope" value="Eukaryota"/>
</dbReference>
<dbReference type="GeneTree" id="ENSGT00940000155061"/>
<dbReference type="HOGENOM" id="CLU_011021_3_0_1"/>
<dbReference type="InParanoid" id="Q5DTT2"/>
<dbReference type="OMA" id="AKWEFFF"/>
<dbReference type="OrthoDB" id="75945at9989"/>
<dbReference type="PhylomeDB" id="Q5DTT2"/>
<dbReference type="TreeFam" id="TF319755"/>
<dbReference type="BioGRID-ORCS" id="73728">
    <property type="hits" value="5 hits in 79 CRISPR screens"/>
</dbReference>
<dbReference type="CD-CODE" id="764D0258">
    <property type="entry name" value="Neuronal RNP granule"/>
</dbReference>
<dbReference type="CD-CODE" id="CE726F99">
    <property type="entry name" value="Postsynaptic density"/>
</dbReference>
<dbReference type="ChiTaRS" id="Psd">
    <property type="organism name" value="mouse"/>
</dbReference>
<dbReference type="PRO" id="PR:Q5DTT2"/>
<dbReference type="Proteomes" id="UP000000589">
    <property type="component" value="Chromosome 19"/>
</dbReference>
<dbReference type="RNAct" id="Q5DTT2">
    <property type="molecule type" value="protein"/>
</dbReference>
<dbReference type="Bgee" id="ENSMUSG00000037126">
    <property type="expression patterns" value="Expressed in embryonic brain and 135 other cell types or tissues"/>
</dbReference>
<dbReference type="ExpressionAtlas" id="Q5DTT2">
    <property type="expression patterns" value="baseline and differential"/>
</dbReference>
<dbReference type="GO" id="GO:0032154">
    <property type="term" value="C:cleavage furrow"/>
    <property type="evidence" value="ECO:0000250"/>
    <property type="project" value="UniProtKB"/>
</dbReference>
<dbReference type="GO" id="GO:0043197">
    <property type="term" value="C:dendritic spine"/>
    <property type="evidence" value="ECO:0000314"/>
    <property type="project" value="SynGO-UCL"/>
</dbReference>
<dbReference type="GO" id="GO:0014069">
    <property type="term" value="C:postsynaptic density"/>
    <property type="evidence" value="ECO:0000314"/>
    <property type="project" value="SynGO-UCL"/>
</dbReference>
<dbReference type="GO" id="GO:0099092">
    <property type="term" value="C:postsynaptic density, intracellular component"/>
    <property type="evidence" value="ECO:0000314"/>
    <property type="project" value="SynGO-UCL"/>
</dbReference>
<dbReference type="GO" id="GO:0032587">
    <property type="term" value="C:ruffle membrane"/>
    <property type="evidence" value="ECO:0000250"/>
    <property type="project" value="UniProtKB"/>
</dbReference>
<dbReference type="GO" id="GO:0005085">
    <property type="term" value="F:guanyl-nucleotide exchange factor activity"/>
    <property type="evidence" value="ECO:0000250"/>
    <property type="project" value="UniProtKB"/>
</dbReference>
<dbReference type="GO" id="GO:0005543">
    <property type="term" value="F:phospholipid binding"/>
    <property type="evidence" value="ECO:0007669"/>
    <property type="project" value="InterPro"/>
</dbReference>
<dbReference type="GO" id="GO:0031175">
    <property type="term" value="P:neuron projection development"/>
    <property type="evidence" value="ECO:0000314"/>
    <property type="project" value="SynGO-UCL"/>
</dbReference>
<dbReference type="GO" id="GO:0032012">
    <property type="term" value="P:regulation of ARF protein signal transduction"/>
    <property type="evidence" value="ECO:0007669"/>
    <property type="project" value="InterPro"/>
</dbReference>
<dbReference type="CDD" id="cd13295">
    <property type="entry name" value="PH_EFA6"/>
    <property type="match status" value="1"/>
</dbReference>
<dbReference type="CDD" id="cd00171">
    <property type="entry name" value="Sec7"/>
    <property type="match status" value="1"/>
</dbReference>
<dbReference type="FunFam" id="1.10.1000.11:FF:000004">
    <property type="entry name" value="PH and SEC7 domain-containing protein 2"/>
    <property type="match status" value="1"/>
</dbReference>
<dbReference type="FunFam" id="2.30.29.30:FF:000054">
    <property type="entry name" value="PH and SEC7 domain-containing protein 3"/>
    <property type="match status" value="1"/>
</dbReference>
<dbReference type="Gene3D" id="1.10.1000.11">
    <property type="entry name" value="Arf Nucleotide-binding Site Opener,domain 2"/>
    <property type="match status" value="1"/>
</dbReference>
<dbReference type="Gene3D" id="2.30.29.30">
    <property type="entry name" value="Pleckstrin-homology domain (PH domain)/Phosphotyrosine-binding domain (PTB)"/>
    <property type="match status" value="1"/>
</dbReference>
<dbReference type="InterPro" id="IPR011993">
    <property type="entry name" value="PH-like_dom_sf"/>
</dbReference>
<dbReference type="InterPro" id="IPR041681">
    <property type="entry name" value="PH_9"/>
</dbReference>
<dbReference type="InterPro" id="IPR001605">
    <property type="entry name" value="PH_dom-spectrin-type"/>
</dbReference>
<dbReference type="InterPro" id="IPR001849">
    <property type="entry name" value="PH_domain"/>
</dbReference>
<dbReference type="InterPro" id="IPR023394">
    <property type="entry name" value="Sec7_C_sf"/>
</dbReference>
<dbReference type="InterPro" id="IPR000904">
    <property type="entry name" value="Sec7_dom"/>
</dbReference>
<dbReference type="InterPro" id="IPR035999">
    <property type="entry name" value="Sec7_dom_sf"/>
</dbReference>
<dbReference type="PANTHER" id="PTHR10663">
    <property type="entry name" value="GUANYL-NUCLEOTIDE EXCHANGE FACTOR"/>
    <property type="match status" value="1"/>
</dbReference>
<dbReference type="PANTHER" id="PTHR10663:SF334">
    <property type="entry name" value="PH AND SEC7 DOMAIN-CONTAINING PROTEIN 1"/>
    <property type="match status" value="1"/>
</dbReference>
<dbReference type="Pfam" id="PF15410">
    <property type="entry name" value="PH_9"/>
    <property type="match status" value="1"/>
</dbReference>
<dbReference type="Pfam" id="PF01369">
    <property type="entry name" value="Sec7"/>
    <property type="match status" value="1"/>
</dbReference>
<dbReference type="PRINTS" id="PR00683">
    <property type="entry name" value="SPECTRINPH"/>
</dbReference>
<dbReference type="SMART" id="SM00233">
    <property type="entry name" value="PH"/>
    <property type="match status" value="1"/>
</dbReference>
<dbReference type="SMART" id="SM00222">
    <property type="entry name" value="Sec7"/>
    <property type="match status" value="1"/>
</dbReference>
<dbReference type="SUPFAM" id="SSF50729">
    <property type="entry name" value="PH domain-like"/>
    <property type="match status" value="1"/>
</dbReference>
<dbReference type="SUPFAM" id="SSF48425">
    <property type="entry name" value="Sec7 domain"/>
    <property type="match status" value="1"/>
</dbReference>
<dbReference type="PROSITE" id="PS50003">
    <property type="entry name" value="PH_DOMAIN"/>
    <property type="match status" value="1"/>
</dbReference>
<dbReference type="PROSITE" id="PS50190">
    <property type="entry name" value="SEC7"/>
    <property type="match status" value="1"/>
</dbReference>
<keyword id="KW-0877">Alternative promoter usage</keyword>
<keyword id="KW-0025">Alternative splicing</keyword>
<keyword id="KW-1003">Cell membrane</keyword>
<keyword id="KW-0966">Cell projection</keyword>
<keyword id="KW-0175">Coiled coil</keyword>
<keyword id="KW-0344">Guanine-nucleotide releasing factor</keyword>
<keyword id="KW-0472">Membrane</keyword>
<keyword id="KW-0597">Phosphoprotein</keyword>
<keyword id="KW-1185">Reference proteome</keyword>
<name>PSD1_MOUSE</name>
<accession>Q5DTT2</accession>
<accession>B2RS07</accession>
<accession>B7ZNN7</accession>
<accession>Q3TY69</accession>
<accession>Q6PE10</accession>
<organism>
    <name type="scientific">Mus musculus</name>
    <name type="common">Mouse</name>
    <dbReference type="NCBI Taxonomy" id="10090"/>
    <lineage>
        <taxon>Eukaryota</taxon>
        <taxon>Metazoa</taxon>
        <taxon>Chordata</taxon>
        <taxon>Craniata</taxon>
        <taxon>Vertebrata</taxon>
        <taxon>Euteleostomi</taxon>
        <taxon>Mammalia</taxon>
        <taxon>Eutheria</taxon>
        <taxon>Euarchontoglires</taxon>
        <taxon>Glires</taxon>
        <taxon>Rodentia</taxon>
        <taxon>Myomorpha</taxon>
        <taxon>Muroidea</taxon>
        <taxon>Muridae</taxon>
        <taxon>Murinae</taxon>
        <taxon>Mus</taxon>
        <taxon>Mus</taxon>
    </lineage>
</organism>
<gene>
    <name type="primary">Psd</name>
    <name type="synonym">Efa6a</name>
    <name type="synonym">Kiaa2011</name>
    <name type="synonym">Psd1</name>
</gene>
<proteinExistence type="evidence at protein level"/>
<sequence length="1024" mass="109687">MAQGAMRFCSEGDCAISPPRCPRRWLPEGPVPQSPPASMYGSTGSLIRRVVGPGPRGRDLGRVTAPCTPLRAPPSPHIAPSPWGPSSPTGQPPPGAQSSVVIFRFVEKASVRPLNGLPASGGLSRSWDLGGISAPRPTPALGPGCNRKLRLEASTSDPLPAGGGSVLPGSRDPSRGPLVPPQIGADGLYSSLPNGLGGTPEHLAMHFRGPADTGFLNQGDTWSSPREVSSHAQRIARAKWEFFYGSLDAPSSGAKPPEQVLPSRGVGSKQGSGVAVGRAAKYSETDLDKVPLRCYRETDIDEVLAEREEADSAIESQPSSEGPHGTAQPPASRPSPCPGPSSSLGSGNEDDEAGGEEDVDDEVFEASEGARPGDHMPHSGLLKSPVPFLLGTSPSADGPDSFSCVFEAILESHRAKGTSYSSLASLEALASPGPTQSPFFTFEMPPQPPAPRPDPPAPAPLAPLEPDSGTSSAADGPWTQRREVEESDAGATLAPRKELPSPSHSEDSFGLGAAPLGSEPPLSQLVSDSDSELDSTERLALGSTDTLSNGQKADLEAAQRLAKRLYRLDGFRKADVARHLGKNNDFSKLVAGEYLKFFVFTGMTLDQALRVFLKELALMGETQERERVLAHFSQRYFQCNPEALSSEDGAHTLTCALMLLNTDLHGHNIGKRMTCGDFIGNLEGLNDGGDFPRELLKALYSSIKNEKLQWAIDEEELRRSLSELADPNPKVIKRVSGGSGSSSSPFLDLTPEPGAAVYKHGALVRKVHADPDCRKTPRGKRGWKSFHGILKGMILYLQKEEYQPGKALSEAELKNAISIHHALATRASDYSKRPHVFYLRTADWRVFLFQAPSLEQMQSWITRINVVAAMFSAPPFPAAVSSQKKFSRPLLPSAATRLSQEEQVRTHEAKLKAMASELREHRAAHLGKKARGKEADEQRQKEAYLEFEKSRYGTYAALLRVKMKAASEELDTIEAALAQAGSTEDGCPPPHSSPSLRPKPTSQPRAQRPGSETRAGAGSTRPKP</sequence>
<reference key="1">
    <citation type="journal article" date="2007" name="Eur. J. Neurosci.">
        <title>Somatodendritic localization of EFA6A, a guanine nucleotide exchange factor for ADP-ribosylation factor 6, and its possible interaction with alpha-actinin in dendritic spines.</title>
        <authorList>
            <person name="Sakagami H."/>
            <person name="Honma T."/>
            <person name="Sukegawa J."/>
            <person name="Owada Y."/>
            <person name="Yanagisawa T."/>
            <person name="Kondo H."/>
        </authorList>
    </citation>
    <scope>NUCLEOTIDE SEQUENCE [MRNA] (ISOFORM 1)</scope>
    <scope>INTERACTION WITH ACTN1</scope>
    <scope>SUBCELLULAR LOCATION</scope>
    <scope>TISSUE SPECIFICITY</scope>
    <source>
        <strain>C57BL/6J</strain>
        <tissue>Brain</tissue>
    </source>
</reference>
<reference key="2">
    <citation type="journal article" date="2009" name="J. Cell Sci.">
        <title>EFA6A encodes two isoforms with distinct biological activities in neuronal cells.</title>
        <authorList>
            <person name="Sironi C."/>
            <person name="Teesalu T."/>
            <person name="Muggia A."/>
            <person name="Fontana G."/>
            <person name="Marino F."/>
            <person name="Savaresi S."/>
            <person name="Talarico D."/>
        </authorList>
    </citation>
    <scope>NUCLEOTIDE SEQUENCE [MRNA] (ISOFORMS 2 AND 3)</scope>
    <scope>FUNCTION</scope>
    <scope>SUBCELLULAR LOCATION</scope>
    <scope>ALTERNATIVE PROMOTER USAGE</scope>
    <scope>ALTERNATIVE SPLICING</scope>
    <scope>TISSUE SPECIFICITY</scope>
    <scope>DEVELOPMENTAL STAGE</scope>
    <scope>MUTAGENESIS OF GLU-621</scope>
    <source>
        <tissue>Brain</tissue>
        <tissue>Embryo</tissue>
    </source>
</reference>
<reference key="3">
    <citation type="journal article" date="2009" name="PLoS Biol.">
        <title>Lineage-specific biology revealed by a finished genome assembly of the mouse.</title>
        <authorList>
            <person name="Church D.M."/>
            <person name="Goodstadt L."/>
            <person name="Hillier L.W."/>
            <person name="Zody M.C."/>
            <person name="Goldstein S."/>
            <person name="She X."/>
            <person name="Bult C.J."/>
            <person name="Agarwala R."/>
            <person name="Cherry J.L."/>
            <person name="DiCuccio M."/>
            <person name="Hlavina W."/>
            <person name="Kapustin Y."/>
            <person name="Meric P."/>
            <person name="Maglott D."/>
            <person name="Birtle Z."/>
            <person name="Marques A.C."/>
            <person name="Graves T."/>
            <person name="Zhou S."/>
            <person name="Teague B."/>
            <person name="Potamousis K."/>
            <person name="Churas C."/>
            <person name="Place M."/>
            <person name="Herschleb J."/>
            <person name="Runnheim R."/>
            <person name="Forrest D."/>
            <person name="Amos-Landgraf J."/>
            <person name="Schwartz D.C."/>
            <person name="Cheng Z."/>
            <person name="Lindblad-Toh K."/>
            <person name="Eichler E.E."/>
            <person name="Ponting C.P."/>
        </authorList>
    </citation>
    <scope>NUCLEOTIDE SEQUENCE [LARGE SCALE GENOMIC DNA]</scope>
    <source>
        <strain>C57BL/6J</strain>
    </source>
</reference>
<reference key="4">
    <citation type="journal article" date="2005" name="Science">
        <title>The transcriptional landscape of the mammalian genome.</title>
        <authorList>
            <person name="Carninci P."/>
            <person name="Kasukawa T."/>
            <person name="Katayama S."/>
            <person name="Gough J."/>
            <person name="Frith M.C."/>
            <person name="Maeda N."/>
            <person name="Oyama R."/>
            <person name="Ravasi T."/>
            <person name="Lenhard B."/>
            <person name="Wells C."/>
            <person name="Kodzius R."/>
            <person name="Shimokawa K."/>
            <person name="Bajic V.B."/>
            <person name="Brenner S.E."/>
            <person name="Batalov S."/>
            <person name="Forrest A.R."/>
            <person name="Zavolan M."/>
            <person name="Davis M.J."/>
            <person name="Wilming L.G."/>
            <person name="Aidinis V."/>
            <person name="Allen J.E."/>
            <person name="Ambesi-Impiombato A."/>
            <person name="Apweiler R."/>
            <person name="Aturaliya R.N."/>
            <person name="Bailey T.L."/>
            <person name="Bansal M."/>
            <person name="Baxter L."/>
            <person name="Beisel K.W."/>
            <person name="Bersano T."/>
            <person name="Bono H."/>
            <person name="Chalk A.M."/>
            <person name="Chiu K.P."/>
            <person name="Choudhary V."/>
            <person name="Christoffels A."/>
            <person name="Clutterbuck D.R."/>
            <person name="Crowe M.L."/>
            <person name="Dalla E."/>
            <person name="Dalrymple B.P."/>
            <person name="de Bono B."/>
            <person name="Della Gatta G."/>
            <person name="di Bernardo D."/>
            <person name="Down T."/>
            <person name="Engstrom P."/>
            <person name="Fagiolini M."/>
            <person name="Faulkner G."/>
            <person name="Fletcher C.F."/>
            <person name="Fukushima T."/>
            <person name="Furuno M."/>
            <person name="Futaki S."/>
            <person name="Gariboldi M."/>
            <person name="Georgii-Hemming P."/>
            <person name="Gingeras T.R."/>
            <person name="Gojobori T."/>
            <person name="Green R.E."/>
            <person name="Gustincich S."/>
            <person name="Harbers M."/>
            <person name="Hayashi Y."/>
            <person name="Hensch T.K."/>
            <person name="Hirokawa N."/>
            <person name="Hill D."/>
            <person name="Huminiecki L."/>
            <person name="Iacono M."/>
            <person name="Ikeo K."/>
            <person name="Iwama A."/>
            <person name="Ishikawa T."/>
            <person name="Jakt M."/>
            <person name="Kanapin A."/>
            <person name="Katoh M."/>
            <person name="Kawasawa Y."/>
            <person name="Kelso J."/>
            <person name="Kitamura H."/>
            <person name="Kitano H."/>
            <person name="Kollias G."/>
            <person name="Krishnan S.P."/>
            <person name="Kruger A."/>
            <person name="Kummerfeld S.K."/>
            <person name="Kurochkin I.V."/>
            <person name="Lareau L.F."/>
            <person name="Lazarevic D."/>
            <person name="Lipovich L."/>
            <person name="Liu J."/>
            <person name="Liuni S."/>
            <person name="McWilliam S."/>
            <person name="Madan Babu M."/>
            <person name="Madera M."/>
            <person name="Marchionni L."/>
            <person name="Matsuda H."/>
            <person name="Matsuzawa S."/>
            <person name="Miki H."/>
            <person name="Mignone F."/>
            <person name="Miyake S."/>
            <person name="Morris K."/>
            <person name="Mottagui-Tabar S."/>
            <person name="Mulder N."/>
            <person name="Nakano N."/>
            <person name="Nakauchi H."/>
            <person name="Ng P."/>
            <person name="Nilsson R."/>
            <person name="Nishiguchi S."/>
            <person name="Nishikawa S."/>
            <person name="Nori F."/>
            <person name="Ohara O."/>
            <person name="Okazaki Y."/>
            <person name="Orlando V."/>
            <person name="Pang K.C."/>
            <person name="Pavan W.J."/>
            <person name="Pavesi G."/>
            <person name="Pesole G."/>
            <person name="Petrovsky N."/>
            <person name="Piazza S."/>
            <person name="Reed J."/>
            <person name="Reid J.F."/>
            <person name="Ring B.Z."/>
            <person name="Ringwald M."/>
            <person name="Rost B."/>
            <person name="Ruan Y."/>
            <person name="Salzberg S.L."/>
            <person name="Sandelin A."/>
            <person name="Schneider C."/>
            <person name="Schoenbach C."/>
            <person name="Sekiguchi K."/>
            <person name="Semple C.A."/>
            <person name="Seno S."/>
            <person name="Sessa L."/>
            <person name="Sheng Y."/>
            <person name="Shibata Y."/>
            <person name="Shimada H."/>
            <person name="Shimada K."/>
            <person name="Silva D."/>
            <person name="Sinclair B."/>
            <person name="Sperling S."/>
            <person name="Stupka E."/>
            <person name="Sugiura K."/>
            <person name="Sultana R."/>
            <person name="Takenaka Y."/>
            <person name="Taki K."/>
            <person name="Tammoja K."/>
            <person name="Tan S.L."/>
            <person name="Tang S."/>
            <person name="Taylor M.S."/>
            <person name="Tegner J."/>
            <person name="Teichmann S.A."/>
            <person name="Ueda H.R."/>
            <person name="van Nimwegen E."/>
            <person name="Verardo R."/>
            <person name="Wei C.L."/>
            <person name="Yagi K."/>
            <person name="Yamanishi H."/>
            <person name="Zabarovsky E."/>
            <person name="Zhu S."/>
            <person name="Zimmer A."/>
            <person name="Hide W."/>
            <person name="Bult C."/>
            <person name="Grimmond S.M."/>
            <person name="Teasdale R.D."/>
            <person name="Liu E.T."/>
            <person name="Brusic V."/>
            <person name="Quackenbush J."/>
            <person name="Wahlestedt C."/>
            <person name="Mattick J.S."/>
            <person name="Hume D.A."/>
            <person name="Kai C."/>
            <person name="Sasaki D."/>
            <person name="Tomaru Y."/>
            <person name="Fukuda S."/>
            <person name="Kanamori-Katayama M."/>
            <person name="Suzuki M."/>
            <person name="Aoki J."/>
            <person name="Arakawa T."/>
            <person name="Iida J."/>
            <person name="Imamura K."/>
            <person name="Itoh M."/>
            <person name="Kato T."/>
            <person name="Kawaji H."/>
            <person name="Kawagashira N."/>
            <person name="Kawashima T."/>
            <person name="Kojima M."/>
            <person name="Kondo S."/>
            <person name="Konno H."/>
            <person name="Nakano K."/>
            <person name="Ninomiya N."/>
            <person name="Nishio T."/>
            <person name="Okada M."/>
            <person name="Plessy C."/>
            <person name="Shibata K."/>
            <person name="Shiraki T."/>
            <person name="Suzuki S."/>
            <person name="Tagami M."/>
            <person name="Waki K."/>
            <person name="Watahiki A."/>
            <person name="Okamura-Oho Y."/>
            <person name="Suzuki H."/>
            <person name="Kawai J."/>
            <person name="Hayashizaki Y."/>
        </authorList>
    </citation>
    <scope>NUCLEOTIDE SEQUENCE [LARGE SCALE MRNA] (ISOFORM 2)</scope>
    <source>
        <strain>C57BL/6J</strain>
        <tissue>Visual cortex</tissue>
    </source>
</reference>
<reference key="5">
    <citation type="journal article" date="2004" name="Genome Res.">
        <title>The status, quality, and expansion of the NIH full-length cDNA project: the Mammalian Gene Collection (MGC).</title>
        <authorList>
            <consortium name="The MGC Project Team"/>
        </authorList>
    </citation>
    <scope>NUCLEOTIDE SEQUENCE [LARGE SCALE MRNA] (ISOFORMS 1 AND 3)</scope>
    <scope>NUCLEOTIDE SEQUENCE [LARGE SCALE MRNA] OF 805-1024 (ISOFORMS 1/2/3)</scope>
    <source>
        <tissue>Brain</tissue>
    </source>
</reference>
<reference key="6">
    <citation type="submission" date="2005-02" db="EMBL/GenBank/DDBJ databases">
        <title>Prediction of the coding sequences of mouse homologues of KIAA gene. The complete nucleotide sequences of mouse KIAA-homologous cDNAs identified by screening of terminal sequences of cDNA clones randomly sampled from size-fractionated libraries.</title>
        <authorList>
            <person name="Okazaki N."/>
            <person name="Kikuno R.F."/>
            <person name="Ohara R."/>
            <person name="Inamoto S."/>
            <person name="Nagase T."/>
            <person name="Ohara O."/>
            <person name="Koga H."/>
        </authorList>
    </citation>
    <scope>NUCLEOTIDE SEQUENCE [LARGE SCALE MRNA] OF 254-1024 (ISOFORM 1)</scope>
    <source>
        <tissue>Fetal brain</tissue>
    </source>
</reference>
<reference key="7">
    <citation type="journal article" date="2004" name="EMBO Rep.">
        <title>ARF6-dependent interaction of the TWIK1 K+ channel with EFA6, a GDP/GTP exchange factor for ARF6.</title>
        <authorList>
            <person name="Decressac S."/>
            <person name="Franco M."/>
            <person name="Bendahhou S."/>
            <person name="Warth R."/>
            <person name="Knauer S."/>
            <person name="Barhanin J."/>
            <person name="Lazdunski M."/>
            <person name="Lesage F."/>
        </authorList>
    </citation>
    <scope>INTERACTION WITH KCNK1</scope>
    <scope>SUBCELLULAR LOCATION</scope>
</reference>
<reference key="8">
    <citation type="journal article" date="2010" name="Cell">
        <title>A tissue-specific atlas of mouse protein phosphorylation and expression.</title>
        <authorList>
            <person name="Huttlin E.L."/>
            <person name="Jedrychowski M.P."/>
            <person name="Elias J.E."/>
            <person name="Goswami T."/>
            <person name="Rad R."/>
            <person name="Beausoleil S.A."/>
            <person name="Villen J."/>
            <person name="Haas W."/>
            <person name="Sowa M.E."/>
            <person name="Gygi S.P."/>
        </authorList>
    </citation>
    <scope>PHOSPHORYLATION [LARGE SCALE ANALYSIS] AT SER-126; SER-156 AND SER-720</scope>
    <scope>IDENTIFICATION BY MASS SPECTROMETRY [LARGE SCALE ANALYSIS]</scope>
    <source>
        <tissue>Brain</tissue>
    </source>
</reference>
<feature type="chain" id="PRO_0000334161" description="PH and SEC7 domain-containing protein 1">
    <location>
        <begin position="1"/>
        <end position="1024"/>
    </location>
</feature>
<feature type="domain" description="SEC7" evidence="4">
    <location>
        <begin position="512"/>
        <end position="706"/>
    </location>
</feature>
<feature type="domain" description="PH" evidence="3">
    <location>
        <begin position="756"/>
        <end position="869"/>
    </location>
</feature>
<feature type="region of interest" description="Disordered" evidence="5">
    <location>
        <begin position="67"/>
        <end position="96"/>
    </location>
</feature>
<feature type="region of interest" description="Disordered" evidence="5">
    <location>
        <begin position="154"/>
        <end position="195"/>
    </location>
</feature>
<feature type="region of interest" description="Disordered" evidence="5">
    <location>
        <begin position="250"/>
        <end position="277"/>
    </location>
</feature>
<feature type="region of interest" description="Disordered" evidence="5">
    <location>
        <begin position="307"/>
        <end position="401"/>
    </location>
</feature>
<feature type="region of interest" description="Disordered" evidence="5">
    <location>
        <begin position="434"/>
        <end position="536"/>
    </location>
</feature>
<feature type="region of interest" description="Disordered" evidence="5">
    <location>
        <begin position="976"/>
        <end position="1024"/>
    </location>
</feature>
<feature type="coiled-coil region" evidence="2">
    <location>
        <begin position="898"/>
        <end position="924"/>
    </location>
</feature>
<feature type="coiled-coil region" evidence="2">
    <location>
        <begin position="956"/>
        <end position="983"/>
    </location>
</feature>
<feature type="compositionally biased region" description="Pro residues" evidence="5">
    <location>
        <begin position="71"/>
        <end position="95"/>
    </location>
</feature>
<feature type="compositionally biased region" description="Acidic residues" evidence="5">
    <location>
        <begin position="348"/>
        <end position="365"/>
    </location>
</feature>
<feature type="compositionally biased region" description="Pro residues" evidence="5">
    <location>
        <begin position="445"/>
        <end position="463"/>
    </location>
</feature>
<feature type="compositionally biased region" description="Basic and acidic residues" evidence="5">
    <location>
        <begin position="495"/>
        <end position="507"/>
    </location>
</feature>
<feature type="modified residue" description="Phosphoserine" evidence="13">
    <location>
        <position position="126"/>
    </location>
</feature>
<feature type="modified residue" description="Phosphoserine" evidence="13">
    <location>
        <position position="156"/>
    </location>
</feature>
<feature type="modified residue" description="Phosphoserine" evidence="13">
    <location>
        <position position="720"/>
    </location>
</feature>
<feature type="splice variant" id="VSP_033637" description="In isoform 2." evidence="10 11">
    <location>
        <begin position="1"/>
        <end position="631"/>
    </location>
</feature>
<feature type="splice variant" id="VSP_041569" description="In isoform 3." evidence="9 11">
    <original>S</original>
    <variation>SS</variation>
    <location>
        <position position="518"/>
    </location>
</feature>
<feature type="splice variant" id="VSP_033638" description="In isoform 2." evidence="10 11">
    <original>FSQRYFQCNPEALSSEDGAHTLTCALMLLNTDLHGHNIGKRMTCGDFIGNLEGLNDGGDFPRELLK</original>
    <variation>MIGVNSIHSSAGRLRSRSLCSVRYGRTHRGAETLCYGWPQRSRSLKPVLYTDLVVSRLQSRKKKKA</variation>
    <location>
        <begin position="632"/>
        <end position="697"/>
    </location>
</feature>
<feature type="mutagenesis site" description="Significantly impaired guanine nucleotide exchange factor activity on ARF6 in PC12 cells." evidence="8">
    <original>E</original>
    <variation>K</variation>
    <location>
        <position position="621"/>
    </location>
</feature>
<comment type="function">
    <text evidence="1 8">Guanine nucleotide exchange factor for ARF6 (By similarity). Isoform 2 and isoform 3 induce cytoskeletal remodeling, but lead to distinct morphological changes in HeLa cells: isoform 2 induces cell elongation and formation of actin-rich protrusions, whereas isoform 3 promotes the formation of membrane ruffles and loss of stress fibers (PubMed:19494129).</text>
</comment>
<comment type="subunit">
    <text evidence="6 7">Interacts with ACTN1 (PubMed:17298598). Interacts (ARF6-bound form) with KCNK1; does not interact with KCNK1 in the absence of ARF6 (PubMed:15540117).</text>
</comment>
<comment type="subcellular location">
    <molecule>Isoform 1</molecule>
    <subcellularLocation>
        <location evidence="6 7">Cell membrane</location>
    </subcellularLocation>
    <subcellularLocation>
        <location evidence="6 7">Cell projection</location>
        <location evidence="6 7">Ruffle</location>
    </subcellularLocation>
    <text evidence="6 7">Colocalizes with ACTN1 in membrane ruffles and central reticular structures.</text>
</comment>
<comment type="subcellular location">
    <molecule>Isoform 2</molecule>
    <subcellularLocation>
        <location evidence="8">Cell membrane</location>
    </subcellularLocation>
    <subcellularLocation>
        <location evidence="8">Cell projection</location>
    </subcellularLocation>
    <text evidence="8">Accumulates in microvilli-like protrusions.</text>
</comment>
<comment type="subcellular location">
    <molecule>Isoform 3</molecule>
    <subcellularLocation>
        <location evidence="6 8">Cell membrane</location>
    </subcellularLocation>
    <subcellularLocation>
        <location evidence="6 8">Cell projection</location>
        <location evidence="6 8">Ruffle</location>
    </subcellularLocation>
    <text evidence="6 8">Colocalizes with F-actin in membrane ruffles.</text>
</comment>
<comment type="subcellular location">
    <subcellularLocation>
        <location evidence="1">Cell membrane</location>
    </subcellularLocation>
    <subcellularLocation>
        <location evidence="1">Cell projection</location>
        <location evidence="1">Ruffle membrane</location>
    </subcellularLocation>
    <subcellularLocation>
        <location evidence="1">Cleavage furrow</location>
    </subcellularLocation>
    <text evidence="1">Distributed uniformly on the plasma membrane, as well as throughout the cytoplasm during metaphase. Subsequently concentrated at patches in the equatorial region at the onset of cytokinesis, and becomes distributed in the equatorial region concurrent with cleavage furrow ingression. In later cytokinesis phases, fades away from the cleavage furrow and becomes uniformly distributed throughout the plasma membrane.</text>
</comment>
<comment type="alternative products">
    <event type="alternative promoter"/>
    <event type="alternative splicing"/>
    <isoform>
        <id>Q5DTT2-1</id>
        <name>1</name>
        <sequence type="displayed"/>
    </isoform>
    <isoform>
        <id>Q5DTT2-2</id>
        <name>2</name>
        <name>EFA6As</name>
        <sequence type="described" ref="VSP_033637 VSP_033638"/>
    </isoform>
    <isoform>
        <id>Q5DTT2-3</id>
        <name>3</name>
        <name>EFA6A</name>
        <sequence type="described" ref="VSP_041569"/>
    </isoform>
</comment>
<comment type="tissue specificity">
    <text evidence="7 8">Highest expression detected in brain and some expression detected also in uterus, stomach, ovary and intestine, with isoform 2 being expressed at the highest levels. In the brain, isoform 1 is highly expressed in the strata oriens, radiatum, lacunosum-moleculare of the hippocampal CA1-3 regions and the dentate molecular layer of the hippocampal formation, with lower levels detected in the neuronal cell layers and the stratum lucidum (at protein level). Not detected in tongue, thymus, spleen, lung, heart, liver and kidney.</text>
</comment>
<comment type="developmental stage">
    <text evidence="8">Expressed in embryonic, early postnatal and adult brain, with expression up-regulated at postnatal day 4-8 and down-regulated in adults. Isoform 2 expression is up-regulated in adults.</text>
</comment>
<comment type="miscellaneous">
    <molecule>Isoform 2</molecule>
    <text evidence="12">Produced by alternative promoter usage.</text>
</comment>
<comment type="miscellaneous">
    <molecule>Isoform 3</molecule>
    <text evidence="12">Produced by alternative splicing of isoform 1.</text>
</comment>
<comment type="similarity">
    <text evidence="12">Belongs to the PSD family.</text>
</comment>